<gene>
    <name type="primary">HXT4</name>
    <name type="synonym">LGT1</name>
    <name type="synonym">RAG1</name>
    <name type="ORF">C1Q_04971</name>
</gene>
<protein>
    <recommendedName>
        <fullName>Low-affinity glucose transporter HXT4</fullName>
    </recommendedName>
    <alternativeName>
        <fullName>Low-affinity glucose transporter LGT1</fullName>
    </alternativeName>
</protein>
<dbReference type="EMBL" id="ACFL01000394">
    <property type="protein sequence ID" value="EEU04718.1"/>
    <property type="molecule type" value="Genomic_DNA"/>
</dbReference>
<dbReference type="SMR" id="C7GWV6"/>
<dbReference type="GlyCosmos" id="C7GWV6">
    <property type="glycosylation" value="1 site, No reported glycans"/>
</dbReference>
<dbReference type="OrthoDB" id="29886at4893"/>
<dbReference type="Proteomes" id="UP000008073">
    <property type="component" value="Unassembled WGS sequence"/>
</dbReference>
<dbReference type="GO" id="GO:0005886">
    <property type="term" value="C:plasma membrane"/>
    <property type="evidence" value="ECO:0007669"/>
    <property type="project" value="UniProtKB-SubCell"/>
</dbReference>
<dbReference type="GO" id="GO:0005351">
    <property type="term" value="F:carbohydrate:proton symporter activity"/>
    <property type="evidence" value="ECO:0007669"/>
    <property type="project" value="TreeGrafter"/>
</dbReference>
<dbReference type="GO" id="GO:0055056">
    <property type="term" value="F:D-glucose transmembrane transporter activity"/>
    <property type="evidence" value="ECO:0007669"/>
    <property type="project" value="UniProtKB-ARBA"/>
</dbReference>
<dbReference type="CDD" id="cd17356">
    <property type="entry name" value="MFS_HXT"/>
    <property type="match status" value="1"/>
</dbReference>
<dbReference type="FunFam" id="1.20.1250.20:FF:000044">
    <property type="entry name" value="Hexose transporter Hxt3p"/>
    <property type="match status" value="1"/>
</dbReference>
<dbReference type="Gene3D" id="1.20.1250.20">
    <property type="entry name" value="MFS general substrate transporter like domains"/>
    <property type="match status" value="1"/>
</dbReference>
<dbReference type="InterPro" id="IPR020846">
    <property type="entry name" value="MFS_dom"/>
</dbReference>
<dbReference type="InterPro" id="IPR005828">
    <property type="entry name" value="MFS_sugar_transport-like"/>
</dbReference>
<dbReference type="InterPro" id="IPR050360">
    <property type="entry name" value="MFS_Sugar_Transporters"/>
</dbReference>
<dbReference type="InterPro" id="IPR036259">
    <property type="entry name" value="MFS_trans_sf"/>
</dbReference>
<dbReference type="InterPro" id="IPR003663">
    <property type="entry name" value="Sugar/inositol_transpt"/>
</dbReference>
<dbReference type="InterPro" id="IPR005829">
    <property type="entry name" value="Sugar_transporter_CS"/>
</dbReference>
<dbReference type="NCBIfam" id="TIGR00879">
    <property type="entry name" value="SP"/>
    <property type="match status" value="1"/>
</dbReference>
<dbReference type="PANTHER" id="PTHR48022:SF75">
    <property type="entry name" value="GALACTOSE TRANSPORTER-RELATED"/>
    <property type="match status" value="1"/>
</dbReference>
<dbReference type="PANTHER" id="PTHR48022">
    <property type="entry name" value="PLASTIDIC GLUCOSE TRANSPORTER 4"/>
    <property type="match status" value="1"/>
</dbReference>
<dbReference type="Pfam" id="PF00083">
    <property type="entry name" value="Sugar_tr"/>
    <property type="match status" value="1"/>
</dbReference>
<dbReference type="PRINTS" id="PR00171">
    <property type="entry name" value="SUGRTRNSPORT"/>
</dbReference>
<dbReference type="SUPFAM" id="SSF103473">
    <property type="entry name" value="MFS general substrate transporter"/>
    <property type="match status" value="1"/>
</dbReference>
<dbReference type="PROSITE" id="PS50850">
    <property type="entry name" value="MFS"/>
    <property type="match status" value="1"/>
</dbReference>
<dbReference type="PROSITE" id="PS00216">
    <property type="entry name" value="SUGAR_TRANSPORT_1"/>
    <property type="match status" value="1"/>
</dbReference>
<dbReference type="PROSITE" id="PS00217">
    <property type="entry name" value="SUGAR_TRANSPORT_2"/>
    <property type="match status" value="1"/>
</dbReference>
<name>HXT4_YEAS2</name>
<comment type="function">
    <text evidence="1">Low-affinity glucose transporter. Can also transport xylose (By similarity).</text>
</comment>
<comment type="activity regulation">
    <text evidence="1">Xylose uptake is strongly inhibited by glucose.</text>
</comment>
<comment type="subcellular location">
    <subcellularLocation>
        <location evidence="5">Cell membrane</location>
        <topology>Multi-pass membrane protein</topology>
    </subcellularLocation>
</comment>
<comment type="miscellaneous">
    <text>Glucose transport is thought to be mediated by two kinetically distinct systems, a glucose-repressible high-affinity system and a constitutive low-affinity system.</text>
</comment>
<comment type="similarity">
    <text evidence="5">Belongs to the major facilitator superfamily. Sugar transporter (TC 2.A.1.1) family.</text>
</comment>
<sequence>MSEEAAYQEDTAVQNTPADALSPVESDSNSALSTPSNKAERDDMKDFDENHEESNNYVEIPKKPASAYVTVSICCLMVAFGGFVFGWDTGTISGFVAQTDFIRRFGMKHHDGTYYLSKVRTGLMVSIINIGCAIGGIILAKLGDMYGRKMGLIVVVVIYIIGIIIQIASINKWYQYFIGRIISGLGVGGIAVLSPMLISEVSPKHIRGTLVSCYQLMITLGIFLGYCTNYGTKTYTNSVQWRVPLGLGFAWALFMIGGMTFVPESPRYLVEVGKIEEAKRSIALSNKVSADDPAVMAEVEVVQATVEAEKLAGNASWGEIFSTKTKVFQRLIMGAMIQSLQQLTGDNYFFYYGTTVFTAVGLSDSFETSIVLGIVNFASTFVGIFLVERYGRRRCLLWGAASMTACMVVFASVGVTRLWPNGKKNGSSKGAGNCMIVFTCFYLFCFATTWAPIPFVVNSETFPLRVKSKCMAIAQACNWIWGFLIGFFTPFISNAIDFYYGYVFMGCLVFSYFYVFFFVPETKGLTLEEVNTLWEEGVLPWKSPSWVPPNKRGTDYNADDLMHDDQPFYKKMFGKK</sequence>
<keyword id="KW-1003">Cell membrane</keyword>
<keyword id="KW-0325">Glycoprotein</keyword>
<keyword id="KW-1017">Isopeptide bond</keyword>
<keyword id="KW-0472">Membrane</keyword>
<keyword id="KW-0677">Repeat</keyword>
<keyword id="KW-0762">Sugar transport</keyword>
<keyword id="KW-0812">Transmembrane</keyword>
<keyword id="KW-1133">Transmembrane helix</keyword>
<keyword id="KW-0813">Transport</keyword>
<keyword id="KW-0832">Ubl conjugation</keyword>
<accession>C7GWV6</accession>
<reference key="1">
    <citation type="journal article" date="2009" name="Genome Res.">
        <title>Genome structure of a Saccharomyces cerevisiae strain widely used in bioethanol production.</title>
        <authorList>
            <person name="Argueso J.L."/>
            <person name="Carazzolle M.F."/>
            <person name="Mieczkowski P.A."/>
            <person name="Duarte F.M."/>
            <person name="Netto O.V.C."/>
            <person name="Missawa S.K."/>
            <person name="Galzerani F."/>
            <person name="Costa G.G.L."/>
            <person name="Vidal R.O."/>
            <person name="Noronha M.F."/>
            <person name="Dominska M."/>
            <person name="Andrietta M.G.S."/>
            <person name="Andrietta S.R."/>
            <person name="Cunha A.F."/>
            <person name="Gomes L.H."/>
            <person name="Tavares F.C.A."/>
            <person name="Alcarde A.R."/>
            <person name="Dietrich F.S."/>
            <person name="McCusker J.H."/>
            <person name="Petes T.D."/>
            <person name="Pereira G.A.G."/>
        </authorList>
    </citation>
    <scope>NUCLEOTIDE SEQUENCE [LARGE SCALE GENOMIC DNA]</scope>
    <source>
        <strain>JAY291</strain>
    </source>
</reference>
<evidence type="ECO:0000250" key="1"/>
<evidence type="ECO:0000250" key="2">
    <source>
        <dbReference type="UniProtKB" id="P32467"/>
    </source>
</evidence>
<evidence type="ECO:0000255" key="3"/>
<evidence type="ECO:0000256" key="4">
    <source>
        <dbReference type="SAM" id="MobiDB-lite"/>
    </source>
</evidence>
<evidence type="ECO:0000305" key="5"/>
<organism>
    <name type="scientific">Saccharomyces cerevisiae (strain JAY291)</name>
    <name type="common">Baker's yeast</name>
    <dbReference type="NCBI Taxonomy" id="574961"/>
    <lineage>
        <taxon>Eukaryota</taxon>
        <taxon>Fungi</taxon>
        <taxon>Dikarya</taxon>
        <taxon>Ascomycota</taxon>
        <taxon>Saccharomycotina</taxon>
        <taxon>Saccharomycetes</taxon>
        <taxon>Saccharomycetales</taxon>
        <taxon>Saccharomycetaceae</taxon>
        <taxon>Saccharomyces</taxon>
    </lineage>
</organism>
<feature type="chain" id="PRO_0000392108" description="Low-affinity glucose transporter HXT4">
    <location>
        <begin position="1"/>
        <end position="576"/>
    </location>
</feature>
<feature type="topological domain" description="Cytoplasmic" evidence="3">
    <location>
        <begin position="1"/>
        <end position="66"/>
    </location>
</feature>
<feature type="transmembrane region" description="Helical; Name=1" evidence="3">
    <location>
        <begin position="67"/>
        <end position="87"/>
    </location>
</feature>
<feature type="topological domain" description="Extracellular" evidence="3">
    <location>
        <begin position="88"/>
        <end position="122"/>
    </location>
</feature>
<feature type="transmembrane region" description="Helical; Name=2" evidence="3">
    <location>
        <begin position="123"/>
        <end position="143"/>
    </location>
</feature>
<feature type="topological domain" description="Cytoplasmic" evidence="3">
    <location>
        <begin position="144"/>
        <end position="149"/>
    </location>
</feature>
<feature type="transmembrane region" description="Helical; Name=3" evidence="3">
    <location>
        <begin position="150"/>
        <end position="170"/>
    </location>
</feature>
<feature type="topological domain" description="Extracellular" evidence="3">
    <location>
        <begin position="171"/>
        <end position="180"/>
    </location>
</feature>
<feature type="transmembrane region" description="Helical; Name=4" evidence="3">
    <location>
        <begin position="181"/>
        <end position="201"/>
    </location>
</feature>
<feature type="topological domain" description="Cytoplasmic" evidence="3">
    <location>
        <begin position="202"/>
        <end position="207"/>
    </location>
</feature>
<feature type="transmembrane region" description="Helical; Name=5" evidence="3">
    <location>
        <begin position="208"/>
        <end position="228"/>
    </location>
</feature>
<feature type="topological domain" description="Extracellular" evidence="3">
    <location>
        <begin position="229"/>
        <end position="242"/>
    </location>
</feature>
<feature type="transmembrane region" description="Helical; Name=6" evidence="3">
    <location>
        <begin position="243"/>
        <end position="263"/>
    </location>
</feature>
<feature type="topological domain" description="Cytoplasmic" evidence="3">
    <location>
        <begin position="264"/>
        <end position="346"/>
    </location>
</feature>
<feature type="transmembrane region" description="Helical; Name=7" evidence="3">
    <location>
        <begin position="347"/>
        <end position="363"/>
    </location>
</feature>
<feature type="topological domain" description="Extracellular" evidence="3">
    <location>
        <begin position="364"/>
        <end position="369"/>
    </location>
</feature>
<feature type="transmembrane region" description="Helical; Name=8" evidence="3">
    <location>
        <begin position="370"/>
        <end position="387"/>
    </location>
</feature>
<feature type="topological domain" description="Cytoplasmic" evidence="3">
    <location>
        <begin position="388"/>
        <end position="394"/>
    </location>
</feature>
<feature type="transmembrane region" description="Helical; Name=9" evidence="3">
    <location>
        <begin position="395"/>
        <end position="415"/>
    </location>
</feature>
<feature type="topological domain" description="Extracellular" evidence="3">
    <location>
        <begin position="416"/>
        <end position="437"/>
    </location>
</feature>
<feature type="transmembrane region" description="Helical; Name=10" evidence="3">
    <location>
        <begin position="438"/>
        <end position="458"/>
    </location>
</feature>
<feature type="topological domain" description="Cytoplasmic" evidence="3">
    <location>
        <begin position="459"/>
        <end position="475"/>
    </location>
</feature>
<feature type="transmembrane region" description="Helical; Name=11" evidence="3">
    <location>
        <begin position="476"/>
        <end position="496"/>
    </location>
</feature>
<feature type="topological domain" description="Extracellular" evidence="3">
    <location>
        <position position="497"/>
    </location>
</feature>
<feature type="transmembrane region" description="Helical; Name=12" evidence="3">
    <location>
        <begin position="498"/>
        <end position="518"/>
    </location>
</feature>
<feature type="topological domain" description="Cytoplasmic" evidence="3">
    <location>
        <begin position="519"/>
        <end position="576"/>
    </location>
</feature>
<feature type="region of interest" description="Disordered" evidence="4">
    <location>
        <begin position="1"/>
        <end position="56"/>
    </location>
</feature>
<feature type="compositionally biased region" description="Polar residues" evidence="4">
    <location>
        <begin position="25"/>
        <end position="37"/>
    </location>
</feature>
<feature type="compositionally biased region" description="Basic and acidic residues" evidence="4">
    <location>
        <begin position="38"/>
        <end position="54"/>
    </location>
</feature>
<feature type="glycosylation site" description="N-linked (GlcNAc...) asparagine" evidence="3">
    <location>
        <position position="425"/>
    </location>
</feature>
<feature type="cross-link" description="Glycyl lysine isopeptide (Lys-Gly) (interchain with G-Cter in ubiquitin)" evidence="2">
    <location>
        <position position="45"/>
    </location>
</feature>
<proteinExistence type="inferred from homology"/>